<evidence type="ECO:0000255" key="1">
    <source>
        <dbReference type="HAMAP-Rule" id="MF_02016"/>
    </source>
</evidence>
<evidence type="ECO:0000256" key="2">
    <source>
        <dbReference type="SAM" id="MobiDB-lite"/>
    </source>
</evidence>
<evidence type="ECO:0000305" key="3"/>
<name>MLTF_PSE14</name>
<sequence>MFFRPDFRPRCAKWLIATGLFLMLGACVEKPTTLERVKEDGVLRMITRNSPATYFQDRNGETGFEYELVKRFADDLGVELKIETADNLDDLFDQMNKPGGPVLGAAGLIETPKRKQQARFSHSYLEVTPQVVYRNGQSRPTDPGDLVGKRIVVLKGSAHAEQLAALKAQNPGLEYEESDAVEVVDLLRMVDEGQIDLTLVDSNELAMNQVYFPNVRVAFDLGEAREQRWVVAPGEDNSLLNEINAYLDKVEKNGTLQRLKDRYYGHVDVLGYVGAYTFAQHLQERLPKYEKHFQTSAKKEQVDWRLLAAIGYQESMWQPAVTSKTGVRGLMMLTQNTAQAMGVTNRLDARQSIQGGAKYFAYVKDQLDDSIKEPDRTWLALASYNIGSGHLEDARKLAQNEGLNPDKWLDVKKMLPRLAQKKWYSKTRYGYARGGEPVHFVANIRRYYDILTWVTQPQLEGSQVADGNLHVPGVDKTQPPAPPAPASGSSPDKPAL</sequence>
<proteinExistence type="inferred from homology"/>
<accession>Q48LX4</accession>
<comment type="function">
    <text evidence="1">Murein-degrading enzyme that degrades murein glycan strands and insoluble, high-molecular weight murein sacculi, with the concomitant formation of a 1,6-anhydromuramoyl product. Lytic transglycosylases (LTs) play an integral role in the metabolism of the peptidoglycan (PG) sacculus. Their lytic action creates space within the PG sacculus to allow for its expansion as well as for the insertion of various structures such as secretion systems and flagella.</text>
</comment>
<comment type="catalytic activity">
    <reaction evidence="1">
        <text>Exolytic cleavage of the (1-&gt;4)-beta-glycosidic linkage between N-acetylmuramic acid (MurNAc) and N-acetylglucosamine (GlcNAc) residues in peptidoglycan, from either the reducing or the non-reducing ends of the peptidoglycan chains, with concomitant formation of a 1,6-anhydrobond in the MurNAc residue.</text>
        <dbReference type="EC" id="4.2.2.n1"/>
    </reaction>
</comment>
<comment type="subcellular location">
    <subcellularLocation>
        <location>Cell outer membrane</location>
        <topology>Peripheral membrane protein</topology>
    </subcellularLocation>
    <text evidence="1">Attached to the inner leaflet of the outer membrane.</text>
</comment>
<comment type="domain">
    <text evidence="1">The N-terminal domain does not have lytic activity and probably modulates enzymatic activity. The C-terminal domain is the catalytic active domain.</text>
</comment>
<comment type="similarity">
    <text evidence="1">In the N-terminal section; belongs to the bacterial solute-binding protein 3 family.</text>
</comment>
<comment type="similarity">
    <text evidence="1">In the C-terminal section; belongs to the transglycosylase Slt family.</text>
</comment>
<comment type="sequence caution" evidence="3">
    <conflict type="erroneous initiation">
        <sequence resource="EMBL-CDS" id="AAZ33714"/>
    </conflict>
</comment>
<keyword id="KW-0998">Cell outer membrane</keyword>
<keyword id="KW-0961">Cell wall biogenesis/degradation</keyword>
<keyword id="KW-0456">Lyase</keyword>
<keyword id="KW-0472">Membrane</keyword>
<keyword id="KW-0732">Signal</keyword>
<reference key="1">
    <citation type="journal article" date="2005" name="J. Bacteriol.">
        <title>Whole-genome sequence analysis of Pseudomonas syringae pv. phaseolicola 1448A reveals divergence among pathovars in genes involved in virulence and transposition.</title>
        <authorList>
            <person name="Joardar V."/>
            <person name="Lindeberg M."/>
            <person name="Jackson R.W."/>
            <person name="Selengut J."/>
            <person name="Dodson R."/>
            <person name="Brinkac L.M."/>
            <person name="Daugherty S.C."/>
            <person name="DeBoy R.T."/>
            <person name="Durkin A.S."/>
            <person name="Gwinn Giglio M."/>
            <person name="Madupu R."/>
            <person name="Nelson W.C."/>
            <person name="Rosovitz M.J."/>
            <person name="Sullivan S.A."/>
            <person name="Crabtree J."/>
            <person name="Creasy T."/>
            <person name="Davidsen T.M."/>
            <person name="Haft D.H."/>
            <person name="Zafar N."/>
            <person name="Zhou L."/>
            <person name="Halpin R."/>
            <person name="Holley T."/>
            <person name="Khouri H.M."/>
            <person name="Feldblyum T.V."/>
            <person name="White O."/>
            <person name="Fraser C.M."/>
            <person name="Chatterjee A.K."/>
            <person name="Cartinhour S."/>
            <person name="Schneider D."/>
            <person name="Mansfield J.W."/>
            <person name="Collmer A."/>
            <person name="Buell R."/>
        </authorList>
    </citation>
    <scope>NUCLEOTIDE SEQUENCE [LARGE SCALE GENOMIC DNA]</scope>
    <source>
        <strain>1448A / Race 6</strain>
    </source>
</reference>
<gene>
    <name evidence="1" type="primary">mltF</name>
    <name type="ordered locus">PSPPH_1340</name>
</gene>
<organism>
    <name type="scientific">Pseudomonas savastanoi pv. phaseolicola (strain 1448A / Race 6)</name>
    <name type="common">Pseudomonas syringae pv. phaseolicola (strain 1448A / Race 6)</name>
    <dbReference type="NCBI Taxonomy" id="264730"/>
    <lineage>
        <taxon>Bacteria</taxon>
        <taxon>Pseudomonadati</taxon>
        <taxon>Pseudomonadota</taxon>
        <taxon>Gammaproteobacteria</taxon>
        <taxon>Pseudomonadales</taxon>
        <taxon>Pseudomonadaceae</taxon>
        <taxon>Pseudomonas</taxon>
    </lineage>
</organism>
<protein>
    <recommendedName>
        <fullName evidence="1">Membrane-bound lytic murein transglycosylase F</fullName>
        <ecNumber evidence="1">4.2.2.n1</ecNumber>
    </recommendedName>
    <alternativeName>
        <fullName evidence="1">Murein lyase F</fullName>
    </alternativeName>
</protein>
<feature type="signal peptide" evidence="1">
    <location>
        <begin position="1"/>
        <end position="29"/>
    </location>
</feature>
<feature type="chain" id="PRO_0000353954" description="Membrane-bound lytic murein transglycosylase F">
    <location>
        <begin position="30"/>
        <end position="496"/>
    </location>
</feature>
<feature type="region of interest" description="Non-LT domain" evidence="1">
    <location>
        <begin position="30"/>
        <end position="267"/>
    </location>
</feature>
<feature type="region of interest" description="LT domain" evidence="1">
    <location>
        <begin position="268"/>
        <end position="496"/>
    </location>
</feature>
<feature type="region of interest" description="Disordered" evidence="2">
    <location>
        <begin position="464"/>
        <end position="496"/>
    </location>
</feature>
<feature type="compositionally biased region" description="Low complexity" evidence="2">
    <location>
        <begin position="486"/>
        <end position="496"/>
    </location>
</feature>
<feature type="active site" evidence="1">
    <location>
        <position position="314"/>
    </location>
</feature>
<dbReference type="EC" id="4.2.2.n1" evidence="1"/>
<dbReference type="EMBL" id="CP000058">
    <property type="protein sequence ID" value="AAZ33714.1"/>
    <property type="status" value="ALT_INIT"/>
    <property type="molecule type" value="Genomic_DNA"/>
</dbReference>
<dbReference type="SMR" id="Q48LX4"/>
<dbReference type="CAZy" id="GH23">
    <property type="family name" value="Glycoside Hydrolase Family 23"/>
</dbReference>
<dbReference type="KEGG" id="psp:PSPPH_1340"/>
<dbReference type="eggNOG" id="COG4623">
    <property type="taxonomic scope" value="Bacteria"/>
</dbReference>
<dbReference type="HOGENOM" id="CLU_027494_0_1_6"/>
<dbReference type="Proteomes" id="UP000000551">
    <property type="component" value="Chromosome"/>
</dbReference>
<dbReference type="GO" id="GO:0009279">
    <property type="term" value="C:cell outer membrane"/>
    <property type="evidence" value="ECO:0007669"/>
    <property type="project" value="UniProtKB-SubCell"/>
</dbReference>
<dbReference type="GO" id="GO:0008933">
    <property type="term" value="F:peptidoglycan lytic transglycosylase activity"/>
    <property type="evidence" value="ECO:0007669"/>
    <property type="project" value="UniProtKB-UniRule"/>
</dbReference>
<dbReference type="GO" id="GO:0016998">
    <property type="term" value="P:cell wall macromolecule catabolic process"/>
    <property type="evidence" value="ECO:0007669"/>
    <property type="project" value="UniProtKB-UniRule"/>
</dbReference>
<dbReference type="GO" id="GO:0071555">
    <property type="term" value="P:cell wall organization"/>
    <property type="evidence" value="ECO:0007669"/>
    <property type="project" value="UniProtKB-KW"/>
</dbReference>
<dbReference type="GO" id="GO:0009253">
    <property type="term" value="P:peptidoglycan catabolic process"/>
    <property type="evidence" value="ECO:0007669"/>
    <property type="project" value="TreeGrafter"/>
</dbReference>
<dbReference type="CDD" id="cd13403">
    <property type="entry name" value="MLTF-like"/>
    <property type="match status" value="1"/>
</dbReference>
<dbReference type="CDD" id="cd01009">
    <property type="entry name" value="PBP2_YfhD_N"/>
    <property type="match status" value="1"/>
</dbReference>
<dbReference type="Gene3D" id="1.10.530.10">
    <property type="match status" value="1"/>
</dbReference>
<dbReference type="Gene3D" id="3.40.190.10">
    <property type="entry name" value="Periplasmic binding protein-like II"/>
    <property type="match status" value="2"/>
</dbReference>
<dbReference type="HAMAP" id="MF_02016">
    <property type="entry name" value="MltF"/>
    <property type="match status" value="1"/>
</dbReference>
<dbReference type="InterPro" id="IPR023346">
    <property type="entry name" value="Lysozyme-like_dom_sf"/>
</dbReference>
<dbReference type="InterPro" id="IPR023703">
    <property type="entry name" value="MltF"/>
</dbReference>
<dbReference type="InterPro" id="IPR001638">
    <property type="entry name" value="Solute-binding_3/MltF_N"/>
</dbReference>
<dbReference type="InterPro" id="IPR000189">
    <property type="entry name" value="Transglyc_AS"/>
</dbReference>
<dbReference type="InterPro" id="IPR008258">
    <property type="entry name" value="Transglycosylase_SLT_dom_1"/>
</dbReference>
<dbReference type="NCBIfam" id="NF008112">
    <property type="entry name" value="PRK10859.1"/>
    <property type="match status" value="1"/>
</dbReference>
<dbReference type="PANTHER" id="PTHR35936">
    <property type="entry name" value="MEMBRANE-BOUND LYTIC MUREIN TRANSGLYCOSYLASE F"/>
    <property type="match status" value="1"/>
</dbReference>
<dbReference type="PANTHER" id="PTHR35936:SF32">
    <property type="entry name" value="MEMBRANE-BOUND LYTIC MUREIN TRANSGLYCOSYLASE F"/>
    <property type="match status" value="1"/>
</dbReference>
<dbReference type="Pfam" id="PF00497">
    <property type="entry name" value="SBP_bac_3"/>
    <property type="match status" value="1"/>
</dbReference>
<dbReference type="Pfam" id="PF01464">
    <property type="entry name" value="SLT"/>
    <property type="match status" value="1"/>
</dbReference>
<dbReference type="SMART" id="SM00062">
    <property type="entry name" value="PBPb"/>
    <property type="match status" value="1"/>
</dbReference>
<dbReference type="SUPFAM" id="SSF53955">
    <property type="entry name" value="Lysozyme-like"/>
    <property type="match status" value="1"/>
</dbReference>
<dbReference type="SUPFAM" id="SSF53850">
    <property type="entry name" value="Periplasmic binding protein-like II"/>
    <property type="match status" value="1"/>
</dbReference>
<dbReference type="PROSITE" id="PS51257">
    <property type="entry name" value="PROKAR_LIPOPROTEIN"/>
    <property type="match status" value="1"/>
</dbReference>
<dbReference type="PROSITE" id="PS00922">
    <property type="entry name" value="TRANSGLYCOSYLASE"/>
    <property type="match status" value="1"/>
</dbReference>